<protein>
    <recommendedName>
        <fullName evidence="1">Large ribosomal subunit protein uL3</fullName>
    </recommendedName>
    <alternativeName>
        <fullName evidence="3">50S ribosomal protein L3</fullName>
    </alternativeName>
</protein>
<sequence length="209" mass="22700">MKKAIIGKKVGMTQIFDENGRVIPVTVVEAGPCVVVQKKTVETDGYDAIQVGFGELREKLVNKPRKGHFAKAGVSLRRTLKEFRMEDVANYNVGDEIKVDTFEIGDKVDVSGVSKGKGFQGTIKRWNASRGPMSHGSKFHRAPGSMGAASDPSRTFKNKRMPGHMGAKNTTVLNLEVVKIMPEKNIILIKGGIPGPNKGTVVIRNSVKA</sequence>
<proteinExistence type="inferred from homology"/>
<comment type="function">
    <text evidence="1">One of the primary rRNA binding proteins, it binds directly near the 3'-end of the 23S rRNA, where it nucleates assembly of the 50S subunit.</text>
</comment>
<comment type="subunit">
    <text evidence="1">Part of the 50S ribosomal subunit. Forms a cluster with proteins L14 and L19.</text>
</comment>
<comment type="similarity">
    <text evidence="1">Belongs to the universal ribosomal protein uL3 family.</text>
</comment>
<comment type="sequence caution" evidence="3">
    <conflict type="erroneous initiation">
        <sequence resource="EMBL-CDS" id="BAB82111"/>
    </conflict>
</comment>
<gene>
    <name evidence="1" type="primary">rplC</name>
    <name type="ordered locus">CPE2405</name>
</gene>
<accession>Q8XHS3</accession>
<organism>
    <name type="scientific">Clostridium perfringens (strain 13 / Type A)</name>
    <dbReference type="NCBI Taxonomy" id="195102"/>
    <lineage>
        <taxon>Bacteria</taxon>
        <taxon>Bacillati</taxon>
        <taxon>Bacillota</taxon>
        <taxon>Clostridia</taxon>
        <taxon>Eubacteriales</taxon>
        <taxon>Clostridiaceae</taxon>
        <taxon>Clostridium</taxon>
    </lineage>
</organism>
<dbReference type="EMBL" id="BA000016">
    <property type="protein sequence ID" value="BAB82111.1"/>
    <property type="status" value="ALT_INIT"/>
    <property type="molecule type" value="Genomic_DNA"/>
</dbReference>
<dbReference type="RefSeq" id="WP_003476250.1">
    <property type="nucleotide sequence ID" value="NC_003366.1"/>
</dbReference>
<dbReference type="SMR" id="Q8XHS3"/>
<dbReference type="STRING" id="195102.gene:10491722"/>
<dbReference type="GeneID" id="93001009"/>
<dbReference type="KEGG" id="cpe:CPE2405"/>
<dbReference type="HOGENOM" id="CLU_044142_4_1_9"/>
<dbReference type="Proteomes" id="UP000000818">
    <property type="component" value="Chromosome"/>
</dbReference>
<dbReference type="GO" id="GO:0022625">
    <property type="term" value="C:cytosolic large ribosomal subunit"/>
    <property type="evidence" value="ECO:0007669"/>
    <property type="project" value="TreeGrafter"/>
</dbReference>
<dbReference type="GO" id="GO:0019843">
    <property type="term" value="F:rRNA binding"/>
    <property type="evidence" value="ECO:0007669"/>
    <property type="project" value="UniProtKB-UniRule"/>
</dbReference>
<dbReference type="GO" id="GO:0003735">
    <property type="term" value="F:structural constituent of ribosome"/>
    <property type="evidence" value="ECO:0007669"/>
    <property type="project" value="InterPro"/>
</dbReference>
<dbReference type="GO" id="GO:0006412">
    <property type="term" value="P:translation"/>
    <property type="evidence" value="ECO:0007669"/>
    <property type="project" value="UniProtKB-UniRule"/>
</dbReference>
<dbReference type="FunFam" id="2.40.30.10:FF:000004">
    <property type="entry name" value="50S ribosomal protein L3"/>
    <property type="match status" value="1"/>
</dbReference>
<dbReference type="FunFam" id="3.30.160.810:FF:000001">
    <property type="entry name" value="50S ribosomal protein L3"/>
    <property type="match status" value="1"/>
</dbReference>
<dbReference type="Gene3D" id="3.30.160.810">
    <property type="match status" value="1"/>
</dbReference>
<dbReference type="Gene3D" id="2.40.30.10">
    <property type="entry name" value="Translation factors"/>
    <property type="match status" value="1"/>
</dbReference>
<dbReference type="HAMAP" id="MF_01325_B">
    <property type="entry name" value="Ribosomal_uL3_B"/>
    <property type="match status" value="1"/>
</dbReference>
<dbReference type="InterPro" id="IPR000597">
    <property type="entry name" value="Ribosomal_uL3"/>
</dbReference>
<dbReference type="InterPro" id="IPR019927">
    <property type="entry name" value="Ribosomal_uL3_bac/org-type"/>
</dbReference>
<dbReference type="InterPro" id="IPR019926">
    <property type="entry name" value="Ribosomal_uL3_CS"/>
</dbReference>
<dbReference type="InterPro" id="IPR009000">
    <property type="entry name" value="Transl_B-barrel_sf"/>
</dbReference>
<dbReference type="NCBIfam" id="TIGR03625">
    <property type="entry name" value="L3_bact"/>
    <property type="match status" value="1"/>
</dbReference>
<dbReference type="PANTHER" id="PTHR11229">
    <property type="entry name" value="50S RIBOSOMAL PROTEIN L3"/>
    <property type="match status" value="1"/>
</dbReference>
<dbReference type="PANTHER" id="PTHR11229:SF16">
    <property type="entry name" value="LARGE RIBOSOMAL SUBUNIT PROTEIN UL3C"/>
    <property type="match status" value="1"/>
</dbReference>
<dbReference type="Pfam" id="PF00297">
    <property type="entry name" value="Ribosomal_L3"/>
    <property type="match status" value="1"/>
</dbReference>
<dbReference type="SUPFAM" id="SSF50447">
    <property type="entry name" value="Translation proteins"/>
    <property type="match status" value="1"/>
</dbReference>
<dbReference type="PROSITE" id="PS00474">
    <property type="entry name" value="RIBOSOMAL_L3"/>
    <property type="match status" value="1"/>
</dbReference>
<feature type="chain" id="PRO_0000077091" description="Large ribosomal subunit protein uL3">
    <location>
        <begin position="1"/>
        <end position="209"/>
    </location>
</feature>
<feature type="region of interest" description="Disordered" evidence="2">
    <location>
        <begin position="129"/>
        <end position="153"/>
    </location>
</feature>
<name>RL3_CLOPE</name>
<reference key="1">
    <citation type="journal article" date="2002" name="Proc. Natl. Acad. Sci. U.S.A.">
        <title>Complete genome sequence of Clostridium perfringens, an anaerobic flesh-eater.</title>
        <authorList>
            <person name="Shimizu T."/>
            <person name="Ohtani K."/>
            <person name="Hirakawa H."/>
            <person name="Ohshima K."/>
            <person name="Yamashita A."/>
            <person name="Shiba T."/>
            <person name="Ogasawara N."/>
            <person name="Hattori M."/>
            <person name="Kuhara S."/>
            <person name="Hayashi H."/>
        </authorList>
    </citation>
    <scope>NUCLEOTIDE SEQUENCE [LARGE SCALE GENOMIC DNA]</scope>
    <source>
        <strain>13 / Type A</strain>
    </source>
</reference>
<keyword id="KW-1185">Reference proteome</keyword>
<keyword id="KW-0687">Ribonucleoprotein</keyword>
<keyword id="KW-0689">Ribosomal protein</keyword>
<keyword id="KW-0694">RNA-binding</keyword>
<keyword id="KW-0699">rRNA-binding</keyword>
<evidence type="ECO:0000255" key="1">
    <source>
        <dbReference type="HAMAP-Rule" id="MF_01325"/>
    </source>
</evidence>
<evidence type="ECO:0000256" key="2">
    <source>
        <dbReference type="SAM" id="MobiDB-lite"/>
    </source>
</evidence>
<evidence type="ECO:0000305" key="3"/>